<gene>
    <name evidence="4 9" type="primary">IGKV2-28</name>
</gene>
<protein>
    <recommendedName>
        <fullName evidence="4 9">Immunoglobulin kappa variable 2-28</fullName>
    </recommendedName>
</protein>
<name>KV228_HUMAN</name>
<feature type="signal peptide" evidence="2">
    <location>
        <begin position="1"/>
        <end position="19"/>
    </location>
</feature>
<feature type="chain" id="PRO_5007375759" description="Immunoglobulin kappa variable 2-28" evidence="2">
    <location>
        <begin position="20"/>
        <end position="120"/>
    </location>
</feature>
<feature type="domain" description="Ig-like" evidence="3">
    <location>
        <begin position="20"/>
        <end position="120" status="greater than"/>
    </location>
</feature>
<feature type="region of interest" description="Framework-1" evidence="1">
    <location>
        <begin position="21"/>
        <end position="43"/>
    </location>
</feature>
<feature type="region of interest" description="Complementarity-determining-1" evidence="1">
    <location>
        <begin position="44"/>
        <end position="59"/>
    </location>
</feature>
<feature type="region of interest" description="Framework-2" evidence="1">
    <location>
        <begin position="60"/>
        <end position="74"/>
    </location>
</feature>
<feature type="region of interest" description="Complementarity-determining-2" evidence="1">
    <location>
        <begin position="75"/>
        <end position="81"/>
    </location>
</feature>
<feature type="region of interest" description="Framework-3" evidence="1">
    <location>
        <begin position="82"/>
        <end position="113"/>
    </location>
</feature>
<feature type="region of interest" description="Complementarity-determining-3" evidence="1">
    <location>
        <begin position="114"/>
        <end position="120" status="greater than"/>
    </location>
</feature>
<feature type="disulfide bond" evidence="3">
    <location>
        <begin position="43"/>
        <end position="113"/>
    </location>
</feature>
<feature type="non-terminal residue">
    <location>
        <position position="120"/>
    </location>
</feature>
<accession>A0A075B6P5</accession>
<reference key="1">
    <citation type="journal article" date="2005" name="Nature">
        <title>Generation and annotation of the DNA sequences of human chromosomes 2 and 4.</title>
        <authorList>
            <person name="Hillier L.W."/>
            <person name="Graves T.A."/>
            <person name="Fulton R.S."/>
            <person name="Fulton L.A."/>
            <person name="Pepin K.H."/>
            <person name="Minx P."/>
            <person name="Wagner-McPherson C."/>
            <person name="Layman D."/>
            <person name="Wylie K."/>
            <person name="Sekhon M."/>
            <person name="Becker M.C."/>
            <person name="Fewell G.A."/>
            <person name="Delehaunty K.D."/>
            <person name="Miner T.L."/>
            <person name="Nash W.E."/>
            <person name="Kremitzki C."/>
            <person name="Oddy L."/>
            <person name="Du H."/>
            <person name="Sun H."/>
            <person name="Bradshaw-Cordum H."/>
            <person name="Ali J."/>
            <person name="Carter J."/>
            <person name="Cordes M."/>
            <person name="Harris A."/>
            <person name="Isak A."/>
            <person name="van Brunt A."/>
            <person name="Nguyen C."/>
            <person name="Du F."/>
            <person name="Courtney L."/>
            <person name="Kalicki J."/>
            <person name="Ozersky P."/>
            <person name="Abbott S."/>
            <person name="Armstrong J."/>
            <person name="Belter E.A."/>
            <person name="Caruso L."/>
            <person name="Cedroni M."/>
            <person name="Cotton M."/>
            <person name="Davidson T."/>
            <person name="Desai A."/>
            <person name="Elliott G."/>
            <person name="Erb T."/>
            <person name="Fronick C."/>
            <person name="Gaige T."/>
            <person name="Haakenson W."/>
            <person name="Haglund K."/>
            <person name="Holmes A."/>
            <person name="Harkins R."/>
            <person name="Kim K."/>
            <person name="Kruchowski S.S."/>
            <person name="Strong C.M."/>
            <person name="Grewal N."/>
            <person name="Goyea E."/>
            <person name="Hou S."/>
            <person name="Levy A."/>
            <person name="Martinka S."/>
            <person name="Mead K."/>
            <person name="McLellan M.D."/>
            <person name="Meyer R."/>
            <person name="Randall-Maher J."/>
            <person name="Tomlinson C."/>
            <person name="Dauphin-Kohlberg S."/>
            <person name="Kozlowicz-Reilly A."/>
            <person name="Shah N."/>
            <person name="Swearengen-Shahid S."/>
            <person name="Snider J."/>
            <person name="Strong J.T."/>
            <person name="Thompson J."/>
            <person name="Yoakum M."/>
            <person name="Leonard S."/>
            <person name="Pearman C."/>
            <person name="Trani L."/>
            <person name="Radionenko M."/>
            <person name="Waligorski J.E."/>
            <person name="Wang C."/>
            <person name="Rock S.M."/>
            <person name="Tin-Wollam A.-M."/>
            <person name="Maupin R."/>
            <person name="Latreille P."/>
            <person name="Wendl M.C."/>
            <person name="Yang S.-P."/>
            <person name="Pohl C."/>
            <person name="Wallis J.W."/>
            <person name="Spieth J."/>
            <person name="Bieri T.A."/>
            <person name="Berkowicz N."/>
            <person name="Nelson J.O."/>
            <person name="Osborne J."/>
            <person name="Ding L."/>
            <person name="Meyer R."/>
            <person name="Sabo A."/>
            <person name="Shotland Y."/>
            <person name="Sinha P."/>
            <person name="Wohldmann P.E."/>
            <person name="Cook L.L."/>
            <person name="Hickenbotham M.T."/>
            <person name="Eldred J."/>
            <person name="Williams D."/>
            <person name="Jones T.A."/>
            <person name="She X."/>
            <person name="Ciccarelli F.D."/>
            <person name="Izaurralde E."/>
            <person name="Taylor J."/>
            <person name="Schmutz J."/>
            <person name="Myers R.M."/>
            <person name="Cox D.R."/>
            <person name="Huang X."/>
            <person name="McPherson J.D."/>
            <person name="Mardis E.R."/>
            <person name="Clifton S.W."/>
            <person name="Warren W.C."/>
            <person name="Chinwalla A.T."/>
            <person name="Eddy S.R."/>
            <person name="Marra M.A."/>
            <person name="Ovcharenko I."/>
            <person name="Furey T.S."/>
            <person name="Miller W."/>
            <person name="Eichler E.E."/>
            <person name="Bork P."/>
            <person name="Suyama M."/>
            <person name="Torrents D."/>
            <person name="Waterston R.H."/>
            <person name="Wilson R.K."/>
        </authorList>
    </citation>
    <scope>NUCLEOTIDE SEQUENCE [LARGE SCALE GENOMIC DNA] (IMGT ALLELE IGKV2-28*01)</scope>
</reference>
<reference key="2">
    <citation type="journal article" date="2001" name="Exp. Clin. Immunogenet.">
        <title>Nomenclature of the human immunoglobulin kappa (IGK) genes.</title>
        <authorList>
            <person name="Lefranc M.P."/>
        </authorList>
    </citation>
    <scope>NOMEMCLATURE</scope>
</reference>
<reference key="3">
    <citation type="book" date="2001" name="The Immunoglobulin FactsBook.">
        <title>The Immunoglobulin FactsBook.</title>
        <editorList>
            <person name="Lefranc M.P."/>
            <person name="Lefranc G."/>
        </editorList>
        <authorList>
            <person name="Lefranc M.P."/>
            <person name="Lefranc G."/>
        </authorList>
    </citation>
    <scope>NOMENCLATURE</scope>
</reference>
<reference key="4">
    <citation type="journal article" date="2007" name="Annu. Rev. Genet.">
        <title>Immunoglobulin somatic hypermutation.</title>
        <authorList>
            <person name="Teng G."/>
            <person name="Papavasiliou F.N."/>
        </authorList>
    </citation>
    <scope>REVIEW ON SOMATIC HYPERMUTATION</scope>
</reference>
<reference key="5">
    <citation type="journal article" date="2010" name="J. Allergy Clin. Immunol.">
        <title>Structure and function of immunoglobulins.</title>
        <authorList>
            <person name="Schroeder H.W. Jr."/>
            <person name="Cavacini L."/>
        </authorList>
    </citation>
    <scope>REVIEW ON IMMUNOGLOBULINS</scope>
</reference>
<reference key="6">
    <citation type="journal article" date="2012" name="Nat. Rev. Immunol.">
        <title>Molecular programming of B cell memory.</title>
        <authorList>
            <person name="McHeyzer-Williams M."/>
            <person name="Okitsu S."/>
            <person name="Wang N."/>
            <person name="McHeyzer-Williams L."/>
        </authorList>
    </citation>
    <scope>REVIEW ON FUNCTION</scope>
</reference>
<reference key="7">
    <citation type="journal article" date="2014" name="Front. Immunol.">
        <title>Immunoglobulin and T Cell Receptor Genes: IMGT((R)) and the Birth and Rise of Immunoinformatics.</title>
        <authorList>
            <person name="Lefranc M.P."/>
        </authorList>
    </citation>
    <scope>NOMENCLATURE</scope>
</reference>
<comment type="function">
    <text evidence="5 6 7 8">V region of the variable domain of immunoglobulin light chains that participates in the antigen recognition (PubMed:24600447). Immunoglobulins, also known as antibodies, are membrane-bound or secreted glycoproteins produced by B lymphocytes. In the recognition phase of humoral immunity, the membrane-bound immunoglobulins serve as receptors which, upon binding of a specific antigen, trigger the clonal expansion and differentiation of B lymphocytes into immunoglobulins-secreting plasma cells. Secreted immunoglobulins mediate the effector phase of humoral immunity, which results in the elimination of bound antigens (PubMed:20176268, PubMed:22158414). The antigen binding site is formed by the variable domain of one heavy chain, together with that of its associated light chain. Thus, each immunoglobulin has two antigen binding sites with remarkable affinity for a particular antigen. The variable domains are assembled by a process called V-(D)-J rearrangement and can then be subjected to somatic hypermutations which, after exposure to antigen and selection, allow affinity maturation for a particular antigen (PubMed:17576170, PubMed:20176268).</text>
</comment>
<comment type="subunit">
    <text evidence="6">Immunoglobulins are composed of two identical heavy chains and two identical light chains; disulfide-linked.</text>
</comment>
<comment type="subcellular location">
    <subcellularLocation>
        <location evidence="6 7">Secreted</location>
    </subcellularLocation>
    <subcellularLocation>
        <location evidence="6 7">Cell membrane</location>
    </subcellularLocation>
</comment>
<comment type="polymorphism">
    <text>There are several alleles. The sequence shown is that of IMGT allele IGKV2-28*01.</text>
</comment>
<comment type="caution">
    <text evidence="10">For an example of a full-length immunoglobulin kappa light chain see AC P0DOX7.</text>
</comment>
<sequence length="120" mass="12957">MRLPAQLLGLLMLWVSGSSGDIVMTQSPLSLPVTPGEPASISCRSSQSLLHSNGYNYLDWYLQKPGQSPQLLIYLGSNRASGVPDRFSGSGSGTDFTLKISRVEAEDVGVYYCMQALQTP</sequence>
<proteinExistence type="inferred from homology"/>
<evidence type="ECO:0000250" key="1">
    <source>
        <dbReference type="UniProtKB" id="P01602"/>
    </source>
</evidence>
<evidence type="ECO:0000255" key="2"/>
<evidence type="ECO:0000255" key="3">
    <source>
        <dbReference type="PROSITE-ProRule" id="PRU00114"/>
    </source>
</evidence>
<evidence type="ECO:0000303" key="4">
    <source>
    </source>
</evidence>
<evidence type="ECO:0000303" key="5">
    <source>
    </source>
</evidence>
<evidence type="ECO:0000303" key="6">
    <source>
    </source>
</evidence>
<evidence type="ECO:0000303" key="7">
    <source>
    </source>
</evidence>
<evidence type="ECO:0000303" key="8">
    <source>
    </source>
</evidence>
<evidence type="ECO:0000303" key="9">
    <source ref="3"/>
</evidence>
<evidence type="ECO:0000305" key="10"/>
<organism>
    <name type="scientific">Homo sapiens</name>
    <name type="common">Human</name>
    <dbReference type="NCBI Taxonomy" id="9606"/>
    <lineage>
        <taxon>Eukaryota</taxon>
        <taxon>Metazoa</taxon>
        <taxon>Chordata</taxon>
        <taxon>Craniata</taxon>
        <taxon>Vertebrata</taxon>
        <taxon>Euteleostomi</taxon>
        <taxon>Mammalia</taxon>
        <taxon>Eutheria</taxon>
        <taxon>Euarchontoglires</taxon>
        <taxon>Primates</taxon>
        <taxon>Haplorrhini</taxon>
        <taxon>Catarrhini</taxon>
        <taxon>Hominidae</taxon>
        <taxon>Homo</taxon>
    </lineage>
</organism>
<keyword id="KW-1064">Adaptive immunity</keyword>
<keyword id="KW-1003">Cell membrane</keyword>
<keyword id="KW-1015">Disulfide bond</keyword>
<keyword id="KW-0391">Immunity</keyword>
<keyword id="KW-1280">Immunoglobulin</keyword>
<keyword id="KW-0393">Immunoglobulin domain</keyword>
<keyword id="KW-0472">Membrane</keyword>
<keyword id="KW-1185">Reference proteome</keyword>
<keyword id="KW-0964">Secreted</keyword>
<keyword id="KW-0732">Signal</keyword>
<dbReference type="EMBL" id="AC244255">
    <property type="status" value="NOT_ANNOTATED_CDS"/>
    <property type="molecule type" value="Genomic_DNA"/>
</dbReference>
<dbReference type="SMR" id="A0A075B6P5"/>
<dbReference type="FunCoup" id="A0A075B6P5">
    <property type="interactions" value="387"/>
</dbReference>
<dbReference type="IntAct" id="A0A075B6P5">
    <property type="interactions" value="1"/>
</dbReference>
<dbReference type="STRING" id="9606.ENSP00000452662"/>
<dbReference type="IMGT_GENE-DB" id="IGKV2-28"/>
<dbReference type="GlyGen" id="A0A075B6P5">
    <property type="glycosylation" value="1 site"/>
</dbReference>
<dbReference type="BioMuta" id="IGKV2-28"/>
<dbReference type="jPOST" id="A0A075B6P5"/>
<dbReference type="MassIVE" id="A0A075B6P5"/>
<dbReference type="PRIDE" id="A0A075B6P5"/>
<dbReference type="Ensembl" id="ENST00000482769.1">
    <property type="protein sequence ID" value="ENSP00000419353.1"/>
    <property type="gene ID" value="ENSG00000244116.3"/>
</dbReference>
<dbReference type="Ensembl" id="ENST00000633682.1">
    <property type="protein sequence ID" value="ENSP00000487690.1"/>
    <property type="gene ID" value="ENSG00000282025.1"/>
</dbReference>
<dbReference type="UCSC" id="uc061lqy.1">
    <property type="organism name" value="human"/>
</dbReference>
<dbReference type="AGR" id="HGNC:5783"/>
<dbReference type="GeneCards" id="IGKV2-28"/>
<dbReference type="HGNC" id="HGNC:5783">
    <property type="gene designation" value="IGKV2-28"/>
</dbReference>
<dbReference type="HPA" id="ENSG00000244116">
    <property type="expression patterns" value="Tissue enhanced (intestine, lymphoid tissue)"/>
</dbReference>
<dbReference type="neXtProt" id="NX_A0A075B6P5"/>
<dbReference type="OpenTargets" id="ENSG00000244116"/>
<dbReference type="VEuPathDB" id="HostDB:ENSG00000244116"/>
<dbReference type="HOGENOM" id="CLU_077975_4_1_1"/>
<dbReference type="InParanoid" id="A0A075B6P5"/>
<dbReference type="OMA" id="RNSHSRC"/>
<dbReference type="OrthoDB" id="9519958at2759"/>
<dbReference type="PAN-GO" id="A0A075B6P5">
    <property type="GO annotations" value="3 GO annotations based on evolutionary models"/>
</dbReference>
<dbReference type="PhylomeDB" id="A0A075B6P5"/>
<dbReference type="PathwayCommons" id="A0A075B6P5"/>
<dbReference type="Reactome" id="R-HSA-166663">
    <property type="pathway name" value="Initial triggering of complement"/>
</dbReference>
<dbReference type="Reactome" id="R-HSA-173623">
    <property type="pathway name" value="Classical antibody-mediated complement activation"/>
</dbReference>
<dbReference type="Reactome" id="R-HSA-198933">
    <property type="pathway name" value="Immunoregulatory interactions between a Lymphoid and a non-Lymphoid cell"/>
</dbReference>
<dbReference type="Reactome" id="R-HSA-202733">
    <property type="pathway name" value="Cell surface interactions at the vascular wall"/>
</dbReference>
<dbReference type="Reactome" id="R-HSA-2029481">
    <property type="pathway name" value="FCGR activation"/>
</dbReference>
<dbReference type="Reactome" id="R-HSA-2029482">
    <property type="pathway name" value="Regulation of actin dynamics for phagocytic cup formation"/>
</dbReference>
<dbReference type="Reactome" id="R-HSA-2029485">
    <property type="pathway name" value="Role of phospholipids in phagocytosis"/>
</dbReference>
<dbReference type="Reactome" id="R-HSA-2168880">
    <property type="pathway name" value="Scavenging of heme from plasma"/>
</dbReference>
<dbReference type="Reactome" id="R-HSA-2454202">
    <property type="pathway name" value="Fc epsilon receptor (FCERI) signaling"/>
</dbReference>
<dbReference type="Reactome" id="R-HSA-2730905">
    <property type="pathway name" value="Role of LAT2/NTAL/LAB on calcium mobilization"/>
</dbReference>
<dbReference type="Reactome" id="R-HSA-2871796">
    <property type="pathway name" value="FCERI mediated MAPK activation"/>
</dbReference>
<dbReference type="Reactome" id="R-HSA-2871809">
    <property type="pathway name" value="FCERI mediated Ca+2 mobilization"/>
</dbReference>
<dbReference type="Reactome" id="R-HSA-2871837">
    <property type="pathway name" value="FCERI mediated NF-kB activation"/>
</dbReference>
<dbReference type="Reactome" id="R-HSA-5690714">
    <property type="pathway name" value="CD22 mediated BCR regulation"/>
</dbReference>
<dbReference type="Reactome" id="R-HSA-9664323">
    <property type="pathway name" value="FCGR3A-mediated IL10 synthesis"/>
</dbReference>
<dbReference type="Reactome" id="R-HSA-9664422">
    <property type="pathway name" value="FCGR3A-mediated phagocytosis"/>
</dbReference>
<dbReference type="Reactome" id="R-HSA-9679191">
    <property type="pathway name" value="Potential therapeutics for SARS"/>
</dbReference>
<dbReference type="Reactome" id="R-HSA-977606">
    <property type="pathway name" value="Regulation of Complement cascade"/>
</dbReference>
<dbReference type="Reactome" id="R-HSA-983695">
    <property type="pathway name" value="Antigen activates B Cell Receptor (BCR) leading to generation of second messengers"/>
</dbReference>
<dbReference type="SignaLink" id="A0A075B6P5"/>
<dbReference type="ChiTaRS" id="IGKV2-28">
    <property type="organism name" value="human"/>
</dbReference>
<dbReference type="Pharos" id="A0A075B6P5">
    <property type="development level" value="Tdark"/>
</dbReference>
<dbReference type="PRO" id="PR:A0A075B6P5"/>
<dbReference type="Proteomes" id="UP000005640">
    <property type="component" value="Chromosome 2"/>
</dbReference>
<dbReference type="RNAct" id="A0A075B6P5">
    <property type="molecule type" value="protein"/>
</dbReference>
<dbReference type="Bgee" id="ENSG00000244116">
    <property type="expression patterns" value="Expressed in rectum and 89 other cell types or tissues"/>
</dbReference>
<dbReference type="GO" id="GO:0005576">
    <property type="term" value="C:extracellular region"/>
    <property type="evidence" value="ECO:0000304"/>
    <property type="project" value="Reactome"/>
</dbReference>
<dbReference type="GO" id="GO:0019814">
    <property type="term" value="C:immunoglobulin complex"/>
    <property type="evidence" value="ECO:0000318"/>
    <property type="project" value="GO_Central"/>
</dbReference>
<dbReference type="GO" id="GO:0005886">
    <property type="term" value="C:plasma membrane"/>
    <property type="evidence" value="ECO:0000304"/>
    <property type="project" value="Reactome"/>
</dbReference>
<dbReference type="GO" id="GO:0002250">
    <property type="term" value="P:adaptive immune response"/>
    <property type="evidence" value="ECO:0007669"/>
    <property type="project" value="UniProtKB-KW"/>
</dbReference>
<dbReference type="GO" id="GO:0006955">
    <property type="term" value="P:immune response"/>
    <property type="evidence" value="ECO:0000318"/>
    <property type="project" value="GO_Central"/>
</dbReference>
<dbReference type="FunFam" id="2.60.40.10:FF:000365">
    <property type="entry name" value="If kappa light chain"/>
    <property type="match status" value="1"/>
</dbReference>
<dbReference type="Gene3D" id="2.60.40.10">
    <property type="entry name" value="Immunoglobulins"/>
    <property type="match status" value="1"/>
</dbReference>
<dbReference type="InterPro" id="IPR007110">
    <property type="entry name" value="Ig-like_dom"/>
</dbReference>
<dbReference type="InterPro" id="IPR036179">
    <property type="entry name" value="Ig-like_dom_sf"/>
</dbReference>
<dbReference type="InterPro" id="IPR013783">
    <property type="entry name" value="Ig-like_fold"/>
</dbReference>
<dbReference type="InterPro" id="IPR013106">
    <property type="entry name" value="Ig_V-set"/>
</dbReference>
<dbReference type="InterPro" id="IPR050150">
    <property type="entry name" value="IgV_Light_Chain"/>
</dbReference>
<dbReference type="PANTHER" id="PTHR23267">
    <property type="entry name" value="IMMUNOGLOBULIN LIGHT CHAIN"/>
    <property type="match status" value="1"/>
</dbReference>
<dbReference type="Pfam" id="PF07686">
    <property type="entry name" value="V-set"/>
    <property type="match status" value="1"/>
</dbReference>
<dbReference type="SMART" id="SM00406">
    <property type="entry name" value="IGv"/>
    <property type="match status" value="1"/>
</dbReference>
<dbReference type="SUPFAM" id="SSF48726">
    <property type="entry name" value="Immunoglobulin"/>
    <property type="match status" value="1"/>
</dbReference>
<dbReference type="PROSITE" id="PS50835">
    <property type="entry name" value="IG_LIKE"/>
    <property type="match status" value="1"/>
</dbReference>